<accession>Q97B99</accession>
<feature type="chain" id="PRO_0000150121" description="DNA repair and recombination protein RadB">
    <location>
        <begin position="1"/>
        <end position="234"/>
    </location>
</feature>
<reference key="1">
    <citation type="journal article" date="2000" name="Proc. Natl. Acad. Sci. U.S.A.">
        <title>Archaeal adaptation to higher temperatures revealed by genomic sequence of Thermoplasma volcanium.</title>
        <authorList>
            <person name="Kawashima T."/>
            <person name="Amano N."/>
            <person name="Koike H."/>
            <person name="Makino S."/>
            <person name="Higuchi S."/>
            <person name="Kawashima-Ohya Y."/>
            <person name="Watanabe K."/>
            <person name="Yamazaki M."/>
            <person name="Kanehori K."/>
            <person name="Kawamoto T."/>
            <person name="Nunoshiba T."/>
            <person name="Yamamoto Y."/>
            <person name="Aramaki H."/>
            <person name="Makino K."/>
            <person name="Suzuki M."/>
        </authorList>
    </citation>
    <scope>NUCLEOTIDE SEQUENCE [LARGE SCALE GENOMIC DNA]</scope>
    <source>
        <strain>ATCC 51530 / DSM 4299 / JCM 9571 / NBRC 15438 / GSS1</strain>
    </source>
</reference>
<protein>
    <recommendedName>
        <fullName>DNA repair and recombination protein RadB</fullName>
    </recommendedName>
</protein>
<keyword id="KW-0067">ATP-binding</keyword>
<keyword id="KW-0227">DNA damage</keyword>
<keyword id="KW-0233">DNA recombination</keyword>
<keyword id="KW-0238">DNA-binding</keyword>
<keyword id="KW-0547">Nucleotide-binding</keyword>
<name>RADB_THEVO</name>
<dbReference type="EMBL" id="BA000011">
    <property type="protein sequence ID" value="BAB59700.1"/>
    <property type="molecule type" value="Genomic_DNA"/>
</dbReference>
<dbReference type="SMR" id="Q97B99"/>
<dbReference type="STRING" id="273116.gene:9381343"/>
<dbReference type="PaxDb" id="273116-14324773"/>
<dbReference type="KEGG" id="tvo:TVG0547169"/>
<dbReference type="eggNOG" id="arCOG00417">
    <property type="taxonomic scope" value="Archaea"/>
</dbReference>
<dbReference type="HOGENOM" id="CLU_041732_2_0_2"/>
<dbReference type="PhylomeDB" id="Q97B99"/>
<dbReference type="Proteomes" id="UP000001017">
    <property type="component" value="Chromosome"/>
</dbReference>
<dbReference type="GO" id="GO:0005524">
    <property type="term" value="F:ATP binding"/>
    <property type="evidence" value="ECO:0007669"/>
    <property type="project" value="UniProtKB-UniRule"/>
</dbReference>
<dbReference type="GO" id="GO:0140664">
    <property type="term" value="F:ATP-dependent DNA damage sensor activity"/>
    <property type="evidence" value="ECO:0007669"/>
    <property type="project" value="InterPro"/>
</dbReference>
<dbReference type="GO" id="GO:0003684">
    <property type="term" value="F:damaged DNA binding"/>
    <property type="evidence" value="ECO:0007669"/>
    <property type="project" value="UniProtKB-UniRule"/>
</dbReference>
<dbReference type="GO" id="GO:0006310">
    <property type="term" value="P:DNA recombination"/>
    <property type="evidence" value="ECO:0007669"/>
    <property type="project" value="UniProtKB-UniRule"/>
</dbReference>
<dbReference type="GO" id="GO:0006281">
    <property type="term" value="P:DNA repair"/>
    <property type="evidence" value="ECO:0007669"/>
    <property type="project" value="UniProtKB-UniRule"/>
</dbReference>
<dbReference type="Gene3D" id="3.40.50.300">
    <property type="entry name" value="P-loop containing nucleotide triphosphate hydrolases"/>
    <property type="match status" value="1"/>
</dbReference>
<dbReference type="InterPro" id="IPR013632">
    <property type="entry name" value="DNA_recomb/repair_Rad51_C"/>
</dbReference>
<dbReference type="InterPro" id="IPR011939">
    <property type="entry name" value="DNA_repair_and_recomb_RadB"/>
</dbReference>
<dbReference type="InterPro" id="IPR027417">
    <property type="entry name" value="P-loop_NTPase"/>
</dbReference>
<dbReference type="InterPro" id="IPR020588">
    <property type="entry name" value="RecA_ATP-bd"/>
</dbReference>
<dbReference type="NCBIfam" id="TIGR02237">
    <property type="entry name" value="recomb_radB"/>
    <property type="match status" value="1"/>
</dbReference>
<dbReference type="PANTHER" id="PTHR22942:SF47">
    <property type="entry name" value="DNA REPAIR AND RECOMBINATION PROTEIN RADB"/>
    <property type="match status" value="1"/>
</dbReference>
<dbReference type="PANTHER" id="PTHR22942">
    <property type="entry name" value="RECA/RAD51/RADA DNA STRAND-PAIRING FAMILY MEMBER"/>
    <property type="match status" value="1"/>
</dbReference>
<dbReference type="Pfam" id="PF08423">
    <property type="entry name" value="Rad51"/>
    <property type="match status" value="1"/>
</dbReference>
<dbReference type="PIRSF" id="PIRSF003336">
    <property type="entry name" value="RadB"/>
    <property type="match status" value="1"/>
</dbReference>
<dbReference type="SUPFAM" id="SSF52540">
    <property type="entry name" value="P-loop containing nucleoside triphosphate hydrolases"/>
    <property type="match status" value="1"/>
</dbReference>
<dbReference type="PROSITE" id="PS50162">
    <property type="entry name" value="RECA_2"/>
    <property type="match status" value="1"/>
</dbReference>
<gene>
    <name type="primary">radB</name>
    <name type="ordered locus">TV0558</name>
    <name type="ORF">TVG0547169</name>
</gene>
<proteinExistence type="inferred from homology"/>
<evidence type="ECO:0000250" key="1"/>
<evidence type="ECO:0000305" key="2"/>
<sequence length="234" mass="26009">MMEEISLQEKIEKLPLGVACIDGLTNGGLEAGIITEIFGEGGSGKSNVCMLAACSALRLGKKVVFIDSEGFSSERFLSICKADNSKLKVIRVFSLDDQEVAITKFSKIIEKDASYGLFILDSFSEFFRLERTGDNQSRVIDFQRQLSLLSSIAAKRKIPVLITNQIYQDIANGDILPFGGYVVDHIMKAIYRLERLPDGRRKMTVMKHRSVKEGNSVEFRIVQDGISCEVKNGN</sequence>
<comment type="function">
    <text evidence="1">Involved in DNA repair and in homologous recombination. May regulate the cleavage reactions of the branch-structured DNA. Has a very weak ATPase activity that is not stimulated by DNA. Binds DNA but does not promote DNA strands exchange (By similarity).</text>
</comment>
<comment type="similarity">
    <text evidence="2">Belongs to the eukaryotic RecA-like protein family. RadB subfamily.</text>
</comment>
<organism>
    <name type="scientific">Thermoplasma volcanium (strain ATCC 51530 / DSM 4299 / JCM 9571 / NBRC 15438 / GSS1)</name>
    <dbReference type="NCBI Taxonomy" id="273116"/>
    <lineage>
        <taxon>Archaea</taxon>
        <taxon>Methanobacteriati</taxon>
        <taxon>Thermoplasmatota</taxon>
        <taxon>Thermoplasmata</taxon>
        <taxon>Thermoplasmatales</taxon>
        <taxon>Thermoplasmataceae</taxon>
        <taxon>Thermoplasma</taxon>
    </lineage>
</organism>